<comment type="function">
    <text evidence="1 5 6">IFN-induced antiviral host restriction factor which efficiently blocks the release of diverse mammalian enveloped viruses by directly tethering nascent virions to the membranes of infected cells. Acts as a direct physical tether, holding virions to the cell membrane and linking virions to each other. The tethered virions can be internalized by endocytosis and subsequently degraded or they can remain on the cell surface. In either case, their spread as cell-free virions is restricted. Its target viruses belong to diverse families, including retroviridae: human immunodeficiency virus type 1 (HIV-1), mouse mammary tumor virus (MMTV) and murine leukemia virus (MLV), filoviridae: ebola virus (EBOV), arenaviridae: lassa virus (LASV), and rhabdoviridae: vesicular stomatitis virus (VSV). Can inhibit cell surface proteolytic activity of MMP14 causing decreased activation of MMP15 which results in inhibition of cell growth and migration. Can stimulate signaling by LILRA4/ILT7 and consequently provide negative feedback to the production of IFN by plasmacytoid dendritic cells in response to viral infection (By similarity). Plays a role in the organization of the subapical actin cytoskeleton in polarized epithelial cells.</text>
</comment>
<comment type="subunit">
    <text evidence="2 5">Parallel homodimer; disulfide-linked. May form homotetramers under reducing conditions. Isoform 1 and isoform 2 form homodimers and also heterodimers with each other. Dimerization is essential for its antiviral activity (By similarity). Interacts (via cytoplasmic domain) with ARHGAP44 (PubMed:19273615). Interacts with MMP14 (via C-terminal cytoplasmic tail). Interacts with LILRA4/ILT7. Interacts with RNF115 (By similarity).</text>
</comment>
<comment type="subcellular location">
    <subcellularLocation>
        <location>Golgi apparatus</location>
        <location>trans-Golgi network</location>
    </subcellularLocation>
    <subcellularLocation>
        <location>Cell membrane</location>
        <topology>Single-pass type II membrane protein</topology>
    </subcellularLocation>
    <subcellularLocation>
        <location>Cell membrane</location>
        <topology>Lipid-anchor</topology>
        <topology>GPI-anchor</topology>
    </subcellularLocation>
    <subcellularLocation>
        <location evidence="1">Late endosome</location>
    </subcellularLocation>
    <subcellularLocation>
        <location>Membrane raft</location>
    </subcellularLocation>
    <subcellularLocation>
        <location evidence="1">Cytoplasm</location>
    </subcellularLocation>
    <subcellularLocation>
        <location>Apical cell membrane</location>
    </subcellularLocation>
    <text evidence="1">Shuttles between the cell membrane, where it is present predominantly in membrane/lipid rafts, and the trans-Golgi network. Forms a complex with MMP14 and localizes to the cytoplasm (By similarity).</text>
</comment>
<comment type="tissue specificity">
    <text evidence="4">Ubiquitously expressed, with highest levels in brain and liver. Present in liver (at protein level).</text>
</comment>
<comment type="domain">
    <text evidence="1">The extracellular coiled coil domain forms an extended 170 A long semi-flexible rod-like structure important for virion retention at the cell surface and prevention of virus spreading.</text>
</comment>
<comment type="PTM">
    <text evidence="4">N-glycosylated.</text>
</comment>
<comment type="PTM">
    <text evidence="1">The GPI anchor is essential for its antiviral activity.</text>
</comment>
<feature type="chain" id="PRO_0000253555" description="Bone marrow stromal antigen 2">
    <location>
        <begin position="1"/>
        <end position="152"/>
    </location>
</feature>
<feature type="propeptide" id="PRO_0000253556" description="Removed in mature form" evidence="3">
    <location>
        <begin position="153"/>
        <end position="172"/>
    </location>
</feature>
<feature type="topological domain" description="Cytoplasmic" evidence="3">
    <location>
        <begin position="1"/>
        <end position="26"/>
    </location>
</feature>
<feature type="transmembrane region" description="Helical; Signal-anchor for type II membrane protein" evidence="3">
    <location>
        <begin position="27"/>
        <end position="47"/>
    </location>
</feature>
<feature type="topological domain" description="Extracellular" evidence="3">
    <location>
        <begin position="48"/>
        <end position="152"/>
    </location>
</feature>
<feature type="coiled-coil region" evidence="3">
    <location>
        <begin position="103"/>
        <end position="149"/>
    </location>
</feature>
<feature type="lipid moiety-binding region" description="GPI-anchor amidated serine" evidence="3">
    <location>
        <position position="152"/>
    </location>
</feature>
<feature type="glycosylation site" description="N-linked (GlcNAc...) asparagine" evidence="3">
    <location>
        <position position="70"/>
    </location>
</feature>
<feature type="glycosylation site" description="N-linked (GlcNAc...) asparagine" evidence="3">
    <location>
        <position position="97"/>
    </location>
</feature>
<feature type="disulfide bond" description="Interchain" evidence="1">
    <location>
        <position position="58"/>
    </location>
</feature>
<feature type="disulfide bond" description="Interchain" evidence="1">
    <location>
        <position position="68"/>
    </location>
</feature>
<feature type="disulfide bond" description="Interchain" evidence="1">
    <location>
        <position position="96"/>
    </location>
</feature>
<feature type="cross-link" description="Glycyl lysine isopeptide (Lys-Gly) (interchain with G-Cter in ubiquitin)" evidence="2">
    <location>
        <position position="20"/>
    </location>
</feature>
<keyword id="KW-1003">Cell membrane</keyword>
<keyword id="KW-0175">Coiled coil</keyword>
<keyword id="KW-0963">Cytoplasm</keyword>
<keyword id="KW-1015">Disulfide bond</keyword>
<keyword id="KW-0967">Endosome</keyword>
<keyword id="KW-0325">Glycoprotein</keyword>
<keyword id="KW-0333">Golgi apparatus</keyword>
<keyword id="KW-0336">GPI-anchor</keyword>
<keyword id="KW-0391">Immunity</keyword>
<keyword id="KW-0399">Innate immunity</keyword>
<keyword id="KW-1017">Isopeptide bond</keyword>
<keyword id="KW-0449">Lipoprotein</keyword>
<keyword id="KW-0472">Membrane</keyword>
<keyword id="KW-1185">Reference proteome</keyword>
<keyword id="KW-0735">Signal-anchor</keyword>
<keyword id="KW-0812">Transmembrane</keyword>
<keyword id="KW-1133">Transmembrane helix</keyword>
<keyword id="KW-0832">Ubl conjugation</keyword>
<accession>Q811A2</accession>
<gene>
    <name type="primary">Bst2</name>
    <name type="synonym">Damp1</name>
</gene>
<sequence length="172" mass="19674">MAPSFYHYLPVAMDERWEPKGWSIRRWWLVAAILVVLIGVVLVCLIVYFANAAHSEACKNGLRLQDECRNTTHLLKHQLTRAQDSLLQTEMQANSCNQTVMDLRDSLKKKVSQTQEQQARIKELENKIERLNQELENLRTQKEISTTVQVNSGGSVVVSSLLVLVAVLFLHF</sequence>
<reference key="1">
    <citation type="journal article" date="2003" name="Traffic">
        <title>Bst-2/HM1.24 is a raft-associated apical membrane protein with an unusual topology.</title>
        <authorList>
            <person name="Kupzig S."/>
            <person name="Korolchuk V."/>
            <person name="Rollason R."/>
            <person name="Sugden A."/>
            <person name="Wilde A."/>
            <person name="Banting G."/>
        </authorList>
    </citation>
    <scope>NUCLEOTIDE SEQUENCE [MRNA]</scope>
    <scope>TISSUE SPECIFICITY</scope>
    <scope>TOPOLOGY</scope>
    <scope>GPI-ANCHOR</scope>
    <scope>GLYCOSYLATION</scope>
    <scope>SUBCELLULAR LOCATION</scope>
    <source>
        <strain>Wistar</strain>
        <tissue>Liver</tissue>
    </source>
</reference>
<reference key="2">
    <citation type="journal article" date="2009" name="J. Cell Biol.">
        <title>A CD317/tetherin-RICH2 complex plays a critical role in the organization of the subapical actin cytoskeleton in polarized epithelial cells.</title>
        <authorList>
            <person name="Rollason R."/>
            <person name="Korolchuk V."/>
            <person name="Hamilton C."/>
            <person name="Jepson M."/>
            <person name="Banting G."/>
        </authorList>
    </citation>
    <scope>FUNCTION</scope>
    <scope>SUBCELLULAR LOCATION</scope>
    <scope>INTERACTION WITH ARHGAP44</scope>
</reference>
<reference key="3">
    <citation type="journal article" date="2010" name="J. Virol.">
        <title>Endogenous CD317/Tetherin limits replication of HIV-1 and murine leukemia virus in rodent cells and is resistant to antagonists from primate viruses.</title>
        <authorList>
            <person name="Goffinet C."/>
            <person name="Schmidt S."/>
            <person name="Kern C."/>
            <person name="Oberbremer L."/>
            <person name="Keppler O.T."/>
        </authorList>
    </citation>
    <scope>FUNCTION</scope>
</reference>
<name>BST2_RAT</name>
<protein>
    <recommendedName>
        <fullName>Bone marrow stromal antigen 2</fullName>
        <shortName>BST-2</shortName>
    </recommendedName>
    <alternativeName>
        <fullName>Protein DAMP-1</fullName>
    </alternativeName>
    <cdAntigenName>CD317</cdAntigenName>
</protein>
<organism>
    <name type="scientific">Rattus norvegicus</name>
    <name type="common">Rat</name>
    <dbReference type="NCBI Taxonomy" id="10116"/>
    <lineage>
        <taxon>Eukaryota</taxon>
        <taxon>Metazoa</taxon>
        <taxon>Chordata</taxon>
        <taxon>Craniata</taxon>
        <taxon>Vertebrata</taxon>
        <taxon>Euteleostomi</taxon>
        <taxon>Mammalia</taxon>
        <taxon>Eutheria</taxon>
        <taxon>Euarchontoglires</taxon>
        <taxon>Glires</taxon>
        <taxon>Rodentia</taxon>
        <taxon>Myomorpha</taxon>
        <taxon>Muroidea</taxon>
        <taxon>Muridae</taxon>
        <taxon>Murinae</taxon>
        <taxon>Rattus</taxon>
    </lineage>
</organism>
<proteinExistence type="evidence at protein level"/>
<dbReference type="EMBL" id="AJ538349">
    <property type="protein sequence ID" value="CAD61869.1"/>
    <property type="molecule type" value="mRNA"/>
</dbReference>
<dbReference type="RefSeq" id="NP_937767.1">
    <property type="nucleotide sequence ID" value="NM_198134.3"/>
</dbReference>
<dbReference type="SMR" id="Q811A2"/>
<dbReference type="BioGRID" id="266956">
    <property type="interactions" value="1"/>
</dbReference>
<dbReference type="FunCoup" id="Q811A2">
    <property type="interactions" value="55"/>
</dbReference>
<dbReference type="IntAct" id="Q811A2">
    <property type="interactions" value="1"/>
</dbReference>
<dbReference type="STRING" id="10116.ENSRNOP00000068951"/>
<dbReference type="GlyCosmos" id="Q811A2">
    <property type="glycosylation" value="2 sites, No reported glycans"/>
</dbReference>
<dbReference type="GlyGen" id="Q811A2">
    <property type="glycosylation" value="2 sites"/>
</dbReference>
<dbReference type="iPTMnet" id="Q811A2"/>
<dbReference type="PhosphoSitePlus" id="Q811A2"/>
<dbReference type="PaxDb" id="10116-ENSRNOP00000031515"/>
<dbReference type="Ensembl" id="ENSRNOT00000091906.2">
    <property type="protein sequence ID" value="ENSRNOP00000073737.2"/>
    <property type="gene ID" value="ENSRNOG00000059900.2"/>
</dbReference>
<dbReference type="GeneID" id="378947"/>
<dbReference type="KEGG" id="rno:378947"/>
<dbReference type="UCSC" id="RGD:727849">
    <property type="organism name" value="rat"/>
</dbReference>
<dbReference type="AGR" id="RGD:727849"/>
<dbReference type="CTD" id="684"/>
<dbReference type="RGD" id="727849">
    <property type="gene designation" value="Bst2"/>
</dbReference>
<dbReference type="eggNOG" id="ENOG502TB0V">
    <property type="taxonomic scope" value="Eukaryota"/>
</dbReference>
<dbReference type="GeneTree" id="ENSGT00390000013782"/>
<dbReference type="InParanoid" id="Q811A2"/>
<dbReference type="OrthoDB" id="92540at9989"/>
<dbReference type="PhylomeDB" id="Q811A2"/>
<dbReference type="Reactome" id="R-RNO-6798695">
    <property type="pathway name" value="Neutrophil degranulation"/>
</dbReference>
<dbReference type="PRO" id="PR:Q811A2"/>
<dbReference type="Proteomes" id="UP000002494">
    <property type="component" value="Chromosome 16"/>
</dbReference>
<dbReference type="GO" id="GO:0016324">
    <property type="term" value="C:apical plasma membrane"/>
    <property type="evidence" value="ECO:0000314"/>
    <property type="project" value="UniProtKB"/>
</dbReference>
<dbReference type="GO" id="GO:0009986">
    <property type="term" value="C:cell surface"/>
    <property type="evidence" value="ECO:0000314"/>
    <property type="project" value="UniProtKB"/>
</dbReference>
<dbReference type="GO" id="GO:0005737">
    <property type="term" value="C:cytoplasm"/>
    <property type="evidence" value="ECO:0000266"/>
    <property type="project" value="RGD"/>
</dbReference>
<dbReference type="GO" id="GO:0005794">
    <property type="term" value="C:Golgi apparatus"/>
    <property type="evidence" value="ECO:0000318"/>
    <property type="project" value="GO_Central"/>
</dbReference>
<dbReference type="GO" id="GO:0045121">
    <property type="term" value="C:membrane raft"/>
    <property type="evidence" value="ECO:0007669"/>
    <property type="project" value="UniProtKB-SubCell"/>
</dbReference>
<dbReference type="GO" id="GO:0005771">
    <property type="term" value="C:multivesicular body"/>
    <property type="evidence" value="ECO:0000266"/>
    <property type="project" value="RGD"/>
</dbReference>
<dbReference type="GO" id="GO:0005886">
    <property type="term" value="C:plasma membrane"/>
    <property type="evidence" value="ECO:0000250"/>
    <property type="project" value="UniProtKB"/>
</dbReference>
<dbReference type="GO" id="GO:0098552">
    <property type="term" value="C:side of membrane"/>
    <property type="evidence" value="ECO:0007669"/>
    <property type="project" value="UniProtKB-KW"/>
</dbReference>
<dbReference type="GO" id="GO:0042802">
    <property type="term" value="F:identical protein binding"/>
    <property type="evidence" value="ECO:0000266"/>
    <property type="project" value="RGD"/>
</dbReference>
<dbReference type="GO" id="GO:0008191">
    <property type="term" value="F:metalloendopeptidase inhibitor activity"/>
    <property type="evidence" value="ECO:0000250"/>
    <property type="project" value="UniProtKB"/>
</dbReference>
<dbReference type="GO" id="GO:0042803">
    <property type="term" value="F:protein homodimerization activity"/>
    <property type="evidence" value="ECO:0000266"/>
    <property type="project" value="RGD"/>
</dbReference>
<dbReference type="GO" id="GO:0051607">
    <property type="term" value="P:defense response to virus"/>
    <property type="evidence" value="ECO:0000266"/>
    <property type="project" value="RGD"/>
</dbReference>
<dbReference type="GO" id="GO:0045087">
    <property type="term" value="P:innate immune response"/>
    <property type="evidence" value="ECO:0000250"/>
    <property type="project" value="UniProtKB"/>
</dbReference>
<dbReference type="GO" id="GO:0030308">
    <property type="term" value="P:negative regulation of cell growth"/>
    <property type="evidence" value="ECO:0000250"/>
    <property type="project" value="UniProtKB"/>
</dbReference>
<dbReference type="GO" id="GO:0030336">
    <property type="term" value="P:negative regulation of cell migration"/>
    <property type="evidence" value="ECO:0000250"/>
    <property type="project" value="UniProtKB"/>
</dbReference>
<dbReference type="GO" id="GO:1901253">
    <property type="term" value="P:negative regulation of intracellular transport of viral material"/>
    <property type="evidence" value="ECO:0000250"/>
    <property type="project" value="UniProtKB"/>
</dbReference>
<dbReference type="GO" id="GO:0002737">
    <property type="term" value="P:negative regulation of plasmacytoid dendritic cell cytokine production"/>
    <property type="evidence" value="ECO:0000250"/>
    <property type="project" value="UniProtKB"/>
</dbReference>
<dbReference type="GO" id="GO:0045071">
    <property type="term" value="P:negative regulation of viral genome replication"/>
    <property type="evidence" value="ECO:0000250"/>
    <property type="project" value="UniProtKB"/>
</dbReference>
<dbReference type="GO" id="GO:0032956">
    <property type="term" value="P:regulation of actin cytoskeleton organization"/>
    <property type="evidence" value="ECO:0000315"/>
    <property type="project" value="UniProtKB"/>
</dbReference>
<dbReference type="GO" id="GO:0035455">
    <property type="term" value="P:response to interferon-alpha"/>
    <property type="evidence" value="ECO:0000250"/>
    <property type="project" value="UniProtKB"/>
</dbReference>
<dbReference type="GO" id="GO:0035456">
    <property type="term" value="P:response to interferon-beta"/>
    <property type="evidence" value="ECO:0000250"/>
    <property type="project" value="UniProtKB"/>
</dbReference>
<dbReference type="GO" id="GO:0034341">
    <property type="term" value="P:response to type II interferon"/>
    <property type="evidence" value="ECO:0000250"/>
    <property type="project" value="UniProtKB"/>
</dbReference>
<dbReference type="GO" id="GO:0009615">
    <property type="term" value="P:response to virus"/>
    <property type="evidence" value="ECO:0000250"/>
    <property type="project" value="UniProtKB"/>
</dbReference>
<dbReference type="FunFam" id="1.20.5.1700:FF:000006">
    <property type="entry name" value="Bone marrow stromal antigen 2"/>
    <property type="match status" value="1"/>
</dbReference>
<dbReference type="Gene3D" id="1.20.5.1700">
    <property type="match status" value="1"/>
</dbReference>
<dbReference type="InterPro" id="IPR024886">
    <property type="entry name" value="BST2"/>
</dbReference>
<dbReference type="PANTHER" id="PTHR15190">
    <property type="entry name" value="BONE MARROW STROMAL ANTIGEN 2"/>
    <property type="match status" value="1"/>
</dbReference>
<dbReference type="PANTHER" id="PTHR15190:SF1">
    <property type="entry name" value="BONE MARROW STROMAL ANTIGEN 2"/>
    <property type="match status" value="1"/>
</dbReference>
<dbReference type="Pfam" id="PF16716">
    <property type="entry name" value="BST2"/>
    <property type="match status" value="1"/>
</dbReference>
<dbReference type="SUPFAM" id="SSF144284">
    <property type="entry name" value="Sec2 N-terminal region"/>
    <property type="match status" value="1"/>
</dbReference>
<evidence type="ECO:0000250" key="1"/>
<evidence type="ECO:0000250" key="2">
    <source>
        <dbReference type="UniProtKB" id="Q10589"/>
    </source>
</evidence>
<evidence type="ECO:0000255" key="3"/>
<evidence type="ECO:0000269" key="4">
    <source>
    </source>
</evidence>
<evidence type="ECO:0000269" key="5">
    <source>
    </source>
</evidence>
<evidence type="ECO:0000269" key="6">
    <source>
    </source>
</evidence>